<protein>
    <recommendedName>
        <fullName evidence="1">tRNA (guanine(6)-N2)-methyltransferase</fullName>
        <ecNumber evidence="1">2.1.1.256</ecNumber>
    </recommendedName>
    <alternativeName>
        <fullName evidence="1">tRNA m2G6-methyltransferase</fullName>
    </alternativeName>
</protein>
<sequence>MKRVQNLLVAVGLSPNYHRRTYPSGKKSLVVRFYATLTPGLEDVAAKEVESFGCKVEEIRERRGRIFFSGEKSAIPLLNHFSRTLERLNVLLLRCEVEGLDDIYAAVKGLDFSFVKGKSFAIRSLRVGEHDFTSMDIARVAGQAVIDSFMESYGERLKVNLNQPDVIIRVELVDSELFVGVDTTGDDAMHKRWWRVYNHPAHLNAAIACGMLRIADWKVDESLIDPMCGSGTIPIEAALMVRNVPNLRDFAYKKLCEWELAFEPNEVRLKLYGMEKFRKHLVGAIRNAVNAGVADTIEFRQGDATEMTGEYDVIITNPPYGLRIHRKGAIERLYHSFARAAKRCMNQNSRLVIITAEHRVFANAAEEAGLQCTHERFVKYGGLLTKIMVFMI</sequence>
<dbReference type="EC" id="2.1.1.256" evidence="1"/>
<dbReference type="EMBL" id="AE000782">
    <property type="protein sequence ID" value="AAB89073.1"/>
    <property type="molecule type" value="Genomic_DNA"/>
</dbReference>
<dbReference type="PIR" id="B69522">
    <property type="entry name" value="B69522"/>
</dbReference>
<dbReference type="SMR" id="O28105"/>
<dbReference type="STRING" id="224325.AF_2178"/>
<dbReference type="PaxDb" id="224325-AF_2178"/>
<dbReference type="DNASU" id="1485406"/>
<dbReference type="EnsemblBacteria" id="AAB89073">
    <property type="protein sequence ID" value="AAB89073"/>
    <property type="gene ID" value="AF_2178"/>
</dbReference>
<dbReference type="KEGG" id="afu:AF_2178"/>
<dbReference type="eggNOG" id="arCOG00048">
    <property type="taxonomic scope" value="Archaea"/>
</dbReference>
<dbReference type="HOGENOM" id="CLU_032119_0_0_2"/>
<dbReference type="OrthoDB" id="7080at2157"/>
<dbReference type="PhylomeDB" id="O28105"/>
<dbReference type="Proteomes" id="UP000002199">
    <property type="component" value="Chromosome"/>
</dbReference>
<dbReference type="GO" id="GO:0005737">
    <property type="term" value="C:cytoplasm"/>
    <property type="evidence" value="ECO:0007669"/>
    <property type="project" value="UniProtKB-SubCell"/>
</dbReference>
<dbReference type="GO" id="GO:0003723">
    <property type="term" value="F:RNA binding"/>
    <property type="evidence" value="ECO:0007669"/>
    <property type="project" value="UniProtKB-KW"/>
</dbReference>
<dbReference type="GO" id="GO:0160117">
    <property type="term" value="F:tRNA (guanine(6)-N2)-methyltransferase activity"/>
    <property type="evidence" value="ECO:0007669"/>
    <property type="project" value="UniProtKB-EC"/>
</dbReference>
<dbReference type="GO" id="GO:0030488">
    <property type="term" value="P:tRNA methylation"/>
    <property type="evidence" value="ECO:0007669"/>
    <property type="project" value="TreeGrafter"/>
</dbReference>
<dbReference type="CDD" id="cd02440">
    <property type="entry name" value="AdoMet_MTases"/>
    <property type="match status" value="1"/>
</dbReference>
<dbReference type="CDD" id="cd11715">
    <property type="entry name" value="THUMP_AdoMetMT"/>
    <property type="match status" value="1"/>
</dbReference>
<dbReference type="Gene3D" id="3.30.2130.30">
    <property type="match status" value="1"/>
</dbReference>
<dbReference type="Gene3D" id="3.40.50.150">
    <property type="entry name" value="Vaccinia Virus protein VP39"/>
    <property type="match status" value="1"/>
</dbReference>
<dbReference type="InterPro" id="IPR002052">
    <property type="entry name" value="DNA_methylase_N6_adenine_CS"/>
</dbReference>
<dbReference type="InterPro" id="IPR000241">
    <property type="entry name" value="RlmKL-like_Mtase"/>
</dbReference>
<dbReference type="InterPro" id="IPR053943">
    <property type="entry name" value="RlmKL-like_Mtase_CS"/>
</dbReference>
<dbReference type="InterPro" id="IPR054170">
    <property type="entry name" value="RlmL_1st"/>
</dbReference>
<dbReference type="InterPro" id="IPR029063">
    <property type="entry name" value="SAM-dependent_MTases_sf"/>
</dbReference>
<dbReference type="InterPro" id="IPR004114">
    <property type="entry name" value="THUMP_dom"/>
</dbReference>
<dbReference type="InterPro" id="IPR053485">
    <property type="entry name" value="tRNA_guanine-N2-MTase"/>
</dbReference>
<dbReference type="NCBIfam" id="NF040721">
    <property type="entry name" value="Trm14_Arch"/>
    <property type="match status" value="1"/>
</dbReference>
<dbReference type="PANTHER" id="PTHR14911">
    <property type="entry name" value="THUMP DOMAIN-CONTAINING"/>
    <property type="match status" value="1"/>
</dbReference>
<dbReference type="PANTHER" id="PTHR14911:SF13">
    <property type="entry name" value="TRNA (GUANINE(6)-N2)-METHYLTRANSFERASE THUMP3"/>
    <property type="match status" value="1"/>
</dbReference>
<dbReference type="Pfam" id="PF22020">
    <property type="entry name" value="RlmL_1st"/>
    <property type="match status" value="1"/>
</dbReference>
<dbReference type="Pfam" id="PF02926">
    <property type="entry name" value="THUMP"/>
    <property type="match status" value="1"/>
</dbReference>
<dbReference type="Pfam" id="PF01170">
    <property type="entry name" value="UPF0020"/>
    <property type="match status" value="1"/>
</dbReference>
<dbReference type="PRINTS" id="PR00507">
    <property type="entry name" value="N12N6MTFRASE"/>
</dbReference>
<dbReference type="SMART" id="SM00981">
    <property type="entry name" value="THUMP"/>
    <property type="match status" value="1"/>
</dbReference>
<dbReference type="SUPFAM" id="SSF53335">
    <property type="entry name" value="S-adenosyl-L-methionine-dependent methyltransferases"/>
    <property type="match status" value="1"/>
</dbReference>
<dbReference type="SUPFAM" id="SSF143437">
    <property type="entry name" value="THUMP domain-like"/>
    <property type="match status" value="1"/>
</dbReference>
<dbReference type="PROSITE" id="PS00092">
    <property type="entry name" value="N6_MTASE"/>
    <property type="match status" value="1"/>
</dbReference>
<dbReference type="PROSITE" id="PS51165">
    <property type="entry name" value="THUMP"/>
    <property type="match status" value="1"/>
</dbReference>
<dbReference type="PROSITE" id="PS01261">
    <property type="entry name" value="UPF0020"/>
    <property type="match status" value="1"/>
</dbReference>
<accession>O28105</accession>
<name>TRM14_ARCFU</name>
<feature type="chain" id="PRO_0000140479" description="tRNA (guanine(6)-N2)-methyltransferase">
    <location>
        <begin position="1"/>
        <end position="392"/>
    </location>
</feature>
<feature type="domain" description="THUMP" evidence="3">
    <location>
        <begin position="73"/>
        <end position="183"/>
    </location>
</feature>
<feature type="binding site" evidence="2">
    <location>
        <begin position="199"/>
        <end position="203"/>
    </location>
    <ligand>
        <name>S-adenosyl-L-methionine</name>
        <dbReference type="ChEBI" id="CHEBI:59789"/>
    </ligand>
</feature>
<feature type="binding site" evidence="2">
    <location>
        <begin position="230"/>
        <end position="232"/>
    </location>
    <ligand>
        <name>S-adenosyl-L-methionine</name>
        <dbReference type="ChEBI" id="CHEBI:59789"/>
    </ligand>
</feature>
<feature type="binding site" evidence="2">
    <location>
        <position position="275"/>
    </location>
    <ligand>
        <name>S-adenosyl-L-methionine</name>
        <dbReference type="ChEBI" id="CHEBI:59789"/>
    </ligand>
</feature>
<feature type="binding site" evidence="2">
    <location>
        <begin position="303"/>
        <end position="304"/>
    </location>
    <ligand>
        <name>S-adenosyl-L-methionine</name>
        <dbReference type="ChEBI" id="CHEBI:59789"/>
    </ligand>
</feature>
<feature type="binding site" evidence="2">
    <location>
        <position position="317"/>
    </location>
    <ligand>
        <name>S-adenosyl-L-methionine</name>
        <dbReference type="ChEBI" id="CHEBI:59789"/>
    </ligand>
</feature>
<keyword id="KW-0963">Cytoplasm</keyword>
<keyword id="KW-0489">Methyltransferase</keyword>
<keyword id="KW-1185">Reference proteome</keyword>
<keyword id="KW-0694">RNA-binding</keyword>
<keyword id="KW-0949">S-adenosyl-L-methionine</keyword>
<keyword id="KW-0808">Transferase</keyword>
<keyword id="KW-0819">tRNA processing</keyword>
<gene>
    <name evidence="1" type="primary">trm14</name>
    <name type="ordered locus">AF_2178</name>
</gene>
<organism>
    <name type="scientific">Archaeoglobus fulgidus (strain ATCC 49558 / DSM 4304 / JCM 9628 / NBRC 100126 / VC-16)</name>
    <dbReference type="NCBI Taxonomy" id="224325"/>
    <lineage>
        <taxon>Archaea</taxon>
        <taxon>Methanobacteriati</taxon>
        <taxon>Methanobacteriota</taxon>
        <taxon>Archaeoglobi</taxon>
        <taxon>Archaeoglobales</taxon>
        <taxon>Archaeoglobaceae</taxon>
        <taxon>Archaeoglobus</taxon>
    </lineage>
</organism>
<comment type="function">
    <text evidence="1">S-adenosyl-L-methionine-dependent methyltransferase that catalyzes the methylation of the guanosine nucleotide at position 6 (m2G6) in tRNA.</text>
</comment>
<comment type="catalytic activity">
    <reaction evidence="1">
        <text>guanosine(6) in tRNA + S-adenosyl-L-methionine = N(2)-methylguanosine(6) in tRNA + S-adenosyl-L-homocysteine + H(+)</text>
        <dbReference type="Rhea" id="RHEA:51116"/>
        <dbReference type="Rhea" id="RHEA-COMP:12888"/>
        <dbReference type="Rhea" id="RHEA-COMP:12889"/>
        <dbReference type="ChEBI" id="CHEBI:15378"/>
        <dbReference type="ChEBI" id="CHEBI:57856"/>
        <dbReference type="ChEBI" id="CHEBI:59789"/>
        <dbReference type="ChEBI" id="CHEBI:74269"/>
        <dbReference type="ChEBI" id="CHEBI:74481"/>
        <dbReference type="EC" id="2.1.1.256"/>
    </reaction>
</comment>
<comment type="subcellular location">
    <subcellularLocation>
        <location evidence="4">Cytoplasm</location>
    </subcellularLocation>
</comment>
<comment type="similarity">
    <text evidence="4">Belongs to the methyltransferase superfamily.</text>
</comment>
<reference key="1">
    <citation type="journal article" date="1997" name="Nature">
        <title>The complete genome sequence of the hyperthermophilic, sulphate-reducing archaeon Archaeoglobus fulgidus.</title>
        <authorList>
            <person name="Klenk H.-P."/>
            <person name="Clayton R.A."/>
            <person name="Tomb J.-F."/>
            <person name="White O."/>
            <person name="Nelson K.E."/>
            <person name="Ketchum K.A."/>
            <person name="Dodson R.J."/>
            <person name="Gwinn M.L."/>
            <person name="Hickey E.K."/>
            <person name="Peterson J.D."/>
            <person name="Richardson D.L."/>
            <person name="Kerlavage A.R."/>
            <person name="Graham D.E."/>
            <person name="Kyrpides N.C."/>
            <person name="Fleischmann R.D."/>
            <person name="Quackenbush J."/>
            <person name="Lee N.H."/>
            <person name="Sutton G.G."/>
            <person name="Gill S.R."/>
            <person name="Kirkness E.F."/>
            <person name="Dougherty B.A."/>
            <person name="McKenney K."/>
            <person name="Adams M.D."/>
            <person name="Loftus B.J."/>
            <person name="Peterson S.N."/>
            <person name="Reich C.I."/>
            <person name="McNeil L.K."/>
            <person name="Badger J.H."/>
            <person name="Glodek A."/>
            <person name="Zhou L."/>
            <person name="Overbeek R."/>
            <person name="Gocayne J.D."/>
            <person name="Weidman J.F."/>
            <person name="McDonald L.A."/>
            <person name="Utterback T.R."/>
            <person name="Cotton M.D."/>
            <person name="Spriggs T."/>
            <person name="Artiach P."/>
            <person name="Kaine B.P."/>
            <person name="Sykes S.M."/>
            <person name="Sadow P.W."/>
            <person name="D'Andrea K.P."/>
            <person name="Bowman C."/>
            <person name="Fujii C."/>
            <person name="Garland S.A."/>
            <person name="Mason T.M."/>
            <person name="Olsen G.J."/>
            <person name="Fraser C.M."/>
            <person name="Smith H.O."/>
            <person name="Woese C.R."/>
            <person name="Venter J.C."/>
        </authorList>
    </citation>
    <scope>NUCLEOTIDE SEQUENCE [LARGE SCALE GENOMIC DNA]</scope>
    <source>
        <strain>ATCC 49558 / DSM 4304 / JCM 9628 / NBRC 100126 / VC-16</strain>
    </source>
</reference>
<proteinExistence type="inferred from homology"/>
<evidence type="ECO:0000250" key="1">
    <source>
        <dbReference type="UniProtKB" id="Q57880"/>
    </source>
</evidence>
<evidence type="ECO:0000250" key="2">
    <source>
        <dbReference type="UniProtKB" id="Q8U248"/>
    </source>
</evidence>
<evidence type="ECO:0000255" key="3">
    <source>
        <dbReference type="PROSITE-ProRule" id="PRU00529"/>
    </source>
</evidence>
<evidence type="ECO:0000305" key="4"/>